<proteinExistence type="inferred from homology"/>
<reference key="1">
    <citation type="submission" date="2006-12" db="EMBL/GenBank/DDBJ databases">
        <title>Complete sequence of chromosome 1 of Paracoccus denitrificans PD1222.</title>
        <authorList>
            <person name="Copeland A."/>
            <person name="Lucas S."/>
            <person name="Lapidus A."/>
            <person name="Barry K."/>
            <person name="Detter J.C."/>
            <person name="Glavina del Rio T."/>
            <person name="Hammon N."/>
            <person name="Israni S."/>
            <person name="Dalin E."/>
            <person name="Tice H."/>
            <person name="Pitluck S."/>
            <person name="Munk A.C."/>
            <person name="Brettin T."/>
            <person name="Bruce D."/>
            <person name="Han C."/>
            <person name="Tapia R."/>
            <person name="Gilna P."/>
            <person name="Schmutz J."/>
            <person name="Larimer F."/>
            <person name="Land M."/>
            <person name="Hauser L."/>
            <person name="Kyrpides N."/>
            <person name="Lykidis A."/>
            <person name="Spiro S."/>
            <person name="Richardson D.J."/>
            <person name="Moir J.W.B."/>
            <person name="Ferguson S.J."/>
            <person name="van Spanning R.J.M."/>
            <person name="Richardson P."/>
        </authorList>
    </citation>
    <scope>NUCLEOTIDE SEQUENCE [LARGE SCALE GENOMIC DNA]</scope>
    <source>
        <strain>Pd 1222</strain>
    </source>
</reference>
<feature type="chain" id="PRO_1000101313" description="Glycine--tRNA ligase beta subunit">
    <location>
        <begin position="1"/>
        <end position="685"/>
    </location>
</feature>
<feature type="region of interest" description="Disordered" evidence="2">
    <location>
        <begin position="58"/>
        <end position="77"/>
    </location>
</feature>
<feature type="compositionally biased region" description="Basic and acidic residues" evidence="2">
    <location>
        <begin position="66"/>
        <end position="77"/>
    </location>
</feature>
<evidence type="ECO:0000255" key="1">
    <source>
        <dbReference type="HAMAP-Rule" id="MF_00255"/>
    </source>
</evidence>
<evidence type="ECO:0000256" key="2">
    <source>
        <dbReference type="SAM" id="MobiDB-lite"/>
    </source>
</evidence>
<comment type="catalytic activity">
    <reaction evidence="1">
        <text>tRNA(Gly) + glycine + ATP = glycyl-tRNA(Gly) + AMP + diphosphate</text>
        <dbReference type="Rhea" id="RHEA:16013"/>
        <dbReference type="Rhea" id="RHEA-COMP:9664"/>
        <dbReference type="Rhea" id="RHEA-COMP:9683"/>
        <dbReference type="ChEBI" id="CHEBI:30616"/>
        <dbReference type="ChEBI" id="CHEBI:33019"/>
        <dbReference type="ChEBI" id="CHEBI:57305"/>
        <dbReference type="ChEBI" id="CHEBI:78442"/>
        <dbReference type="ChEBI" id="CHEBI:78522"/>
        <dbReference type="ChEBI" id="CHEBI:456215"/>
        <dbReference type="EC" id="6.1.1.14"/>
    </reaction>
</comment>
<comment type="subunit">
    <text evidence="1">Tetramer of two alpha and two beta subunits.</text>
</comment>
<comment type="subcellular location">
    <subcellularLocation>
        <location evidence="1">Cytoplasm</location>
    </subcellularLocation>
</comment>
<comment type="similarity">
    <text evidence="1">Belongs to the class-II aminoacyl-tRNA synthetase family.</text>
</comment>
<accession>A1AZF8</accession>
<keyword id="KW-0030">Aminoacyl-tRNA synthetase</keyword>
<keyword id="KW-0067">ATP-binding</keyword>
<keyword id="KW-0963">Cytoplasm</keyword>
<keyword id="KW-0436">Ligase</keyword>
<keyword id="KW-0547">Nucleotide-binding</keyword>
<keyword id="KW-0648">Protein biosynthesis</keyword>
<keyword id="KW-1185">Reference proteome</keyword>
<sequence length="685" mass="74632">MPDLLIELFSEEIPARMQARARGDLKKLVTDGLVEAGLTYKSAGAFSTPRRLALAIEGLTAQSPTTREERKGPRTDAPEAALEGFLRSTGLTREQLEARDDKKGQVWFAVVTKPGRPAAEIVAEVLERAIRDFPWPKSMRWGSGSLRWVRPLHSIICLLSDESGASVVPLEIEGIGAGNTTRGHRFMAPDEIAVSGFEDYAAKLRRARVMLDAAEREAAIRQEAANLAFARGWEIVPDEGLLSEVAGLVEWPVPLMGAIEDRFLALPPEVLQTSMKEHQKFFSARNPKTGRIEGFVTVANIETPDHGETILKGNQRVLAARLSDAAFFWENDLREAKAGMADWAEGLRSVTFQSKLGSQADRIARIAALALEIAPLVGADADQAEQAARIAKLDLRSAMVGEFPELQGIMGRYYALEAGLPEPVADAARDHYSPLGPSDAVPSAPVSVAVALADKLDTLTGFWAIDEKPTGSKDPFALRRAALGVIRLLLVNGVRANLGQTFAKARPDADAADLLAFFHDRLKVHLRDQGVRHDIIDAVLSMPGNDDLVLLVNRATALSDVLKTEDGTNLLQGLKRAGNILAQAEEMDGVEYSFGADPKFAETDEERTLFAALDKAEPAIREAVRLEDFQAATQGIASLRAPIDAFFEAVQINSDNQILRRNRLNLLSRIRDAGRLIADFGRIEG</sequence>
<gene>
    <name evidence="1" type="primary">glyS</name>
    <name type="ordered locus">Pden_0540</name>
</gene>
<protein>
    <recommendedName>
        <fullName evidence="1">Glycine--tRNA ligase beta subunit</fullName>
        <ecNumber evidence="1">6.1.1.14</ecNumber>
    </recommendedName>
    <alternativeName>
        <fullName evidence="1">Glycyl-tRNA synthetase beta subunit</fullName>
        <shortName evidence="1">GlyRS</shortName>
    </alternativeName>
</protein>
<dbReference type="EC" id="6.1.1.14" evidence="1"/>
<dbReference type="EMBL" id="CP000489">
    <property type="protein sequence ID" value="ABL68652.1"/>
    <property type="molecule type" value="Genomic_DNA"/>
</dbReference>
<dbReference type="RefSeq" id="WP_011746885.1">
    <property type="nucleotide sequence ID" value="NC_008686.1"/>
</dbReference>
<dbReference type="SMR" id="A1AZF8"/>
<dbReference type="STRING" id="318586.Pden_0540"/>
<dbReference type="EnsemblBacteria" id="ABL68652">
    <property type="protein sequence ID" value="ABL68652"/>
    <property type="gene ID" value="Pden_0540"/>
</dbReference>
<dbReference type="GeneID" id="93451766"/>
<dbReference type="KEGG" id="pde:Pden_0540"/>
<dbReference type="eggNOG" id="COG0751">
    <property type="taxonomic scope" value="Bacteria"/>
</dbReference>
<dbReference type="HOGENOM" id="CLU_007220_2_1_5"/>
<dbReference type="OrthoDB" id="9775440at2"/>
<dbReference type="Proteomes" id="UP000000361">
    <property type="component" value="Chromosome 1"/>
</dbReference>
<dbReference type="GO" id="GO:0005829">
    <property type="term" value="C:cytosol"/>
    <property type="evidence" value="ECO:0007669"/>
    <property type="project" value="TreeGrafter"/>
</dbReference>
<dbReference type="GO" id="GO:0004814">
    <property type="term" value="F:arginine-tRNA ligase activity"/>
    <property type="evidence" value="ECO:0007669"/>
    <property type="project" value="InterPro"/>
</dbReference>
<dbReference type="GO" id="GO:0005524">
    <property type="term" value="F:ATP binding"/>
    <property type="evidence" value="ECO:0007669"/>
    <property type="project" value="UniProtKB-UniRule"/>
</dbReference>
<dbReference type="GO" id="GO:0004820">
    <property type="term" value="F:glycine-tRNA ligase activity"/>
    <property type="evidence" value="ECO:0007669"/>
    <property type="project" value="UniProtKB-UniRule"/>
</dbReference>
<dbReference type="GO" id="GO:0006420">
    <property type="term" value="P:arginyl-tRNA aminoacylation"/>
    <property type="evidence" value="ECO:0007669"/>
    <property type="project" value="InterPro"/>
</dbReference>
<dbReference type="GO" id="GO:0006426">
    <property type="term" value="P:glycyl-tRNA aminoacylation"/>
    <property type="evidence" value="ECO:0007669"/>
    <property type="project" value="UniProtKB-UniRule"/>
</dbReference>
<dbReference type="HAMAP" id="MF_00255">
    <property type="entry name" value="Gly_tRNA_synth_beta"/>
    <property type="match status" value="1"/>
</dbReference>
<dbReference type="InterPro" id="IPR008909">
    <property type="entry name" value="DALR_anticod-bd"/>
</dbReference>
<dbReference type="InterPro" id="IPR015944">
    <property type="entry name" value="Gly-tRNA-synth_bsu"/>
</dbReference>
<dbReference type="InterPro" id="IPR006194">
    <property type="entry name" value="Gly-tRNA-synth_heterodimer"/>
</dbReference>
<dbReference type="NCBIfam" id="TIGR00211">
    <property type="entry name" value="glyS"/>
    <property type="match status" value="1"/>
</dbReference>
<dbReference type="PANTHER" id="PTHR30075:SF2">
    <property type="entry name" value="GLYCINE--TRNA LIGASE, CHLOROPLASTIC_MITOCHONDRIAL 2"/>
    <property type="match status" value="1"/>
</dbReference>
<dbReference type="PANTHER" id="PTHR30075">
    <property type="entry name" value="GLYCYL-TRNA SYNTHETASE"/>
    <property type="match status" value="1"/>
</dbReference>
<dbReference type="Pfam" id="PF05746">
    <property type="entry name" value="DALR_1"/>
    <property type="match status" value="1"/>
</dbReference>
<dbReference type="Pfam" id="PF02092">
    <property type="entry name" value="tRNA_synt_2f"/>
    <property type="match status" value="1"/>
</dbReference>
<dbReference type="PRINTS" id="PR01045">
    <property type="entry name" value="TRNASYNTHGB"/>
</dbReference>
<dbReference type="SUPFAM" id="SSF109604">
    <property type="entry name" value="HD-domain/PDEase-like"/>
    <property type="match status" value="1"/>
</dbReference>
<dbReference type="PROSITE" id="PS50861">
    <property type="entry name" value="AA_TRNA_LIGASE_II_GLYAB"/>
    <property type="match status" value="1"/>
</dbReference>
<organism>
    <name type="scientific">Paracoccus denitrificans (strain Pd 1222)</name>
    <dbReference type="NCBI Taxonomy" id="318586"/>
    <lineage>
        <taxon>Bacteria</taxon>
        <taxon>Pseudomonadati</taxon>
        <taxon>Pseudomonadota</taxon>
        <taxon>Alphaproteobacteria</taxon>
        <taxon>Rhodobacterales</taxon>
        <taxon>Paracoccaceae</taxon>
        <taxon>Paracoccus</taxon>
    </lineage>
</organism>
<name>SYGB_PARDP</name>